<feature type="chain" id="PRO_0000197723" description="Rhodopsin">
    <location>
        <begin position="1" status="less than"/>
        <end position="287" status="greater than"/>
    </location>
</feature>
<feature type="topological domain" description="Extracellular" evidence="1">
    <location>
        <begin position="1" status="less than"/>
        <end position="5"/>
    </location>
</feature>
<feature type="transmembrane region" description="Helical; Name=1" evidence="1">
    <location>
        <begin position="6"/>
        <end position="30"/>
    </location>
</feature>
<feature type="topological domain" description="Cytoplasmic" evidence="1">
    <location>
        <begin position="31"/>
        <end position="42"/>
    </location>
</feature>
<feature type="transmembrane region" description="Helical; Name=2" evidence="1">
    <location>
        <begin position="43"/>
        <end position="65"/>
    </location>
</feature>
<feature type="topological domain" description="Extracellular" evidence="1">
    <location>
        <begin position="66"/>
        <end position="79"/>
    </location>
</feature>
<feature type="transmembrane region" description="Helical; Name=3" evidence="1">
    <location>
        <begin position="80"/>
        <end position="102"/>
    </location>
</feature>
<feature type="topological domain" description="Cytoplasmic" evidence="1">
    <location>
        <begin position="103"/>
        <end position="121"/>
    </location>
</feature>
<feature type="transmembrane region" description="Helical; Name=4" evidence="1">
    <location>
        <begin position="122"/>
        <end position="142"/>
    </location>
</feature>
<feature type="topological domain" description="Extracellular" evidence="1">
    <location>
        <begin position="143"/>
        <end position="171"/>
    </location>
</feature>
<feature type="transmembrane region" description="Helical; Name=5" evidence="1">
    <location>
        <begin position="172"/>
        <end position="193"/>
    </location>
</feature>
<feature type="topological domain" description="Cytoplasmic" evidence="1">
    <location>
        <begin position="194"/>
        <end position="221"/>
    </location>
</feature>
<feature type="transmembrane region" description="Helical; Name=6" evidence="1">
    <location>
        <begin position="222"/>
        <end position="243"/>
    </location>
</feature>
<feature type="topological domain" description="Extracellular" evidence="1">
    <location>
        <begin position="244"/>
        <end position="255"/>
    </location>
</feature>
<feature type="transmembrane region" description="Helical; Name=7" evidence="1">
    <location>
        <begin position="256"/>
        <end position="277"/>
    </location>
</feature>
<feature type="topological domain" description="Cytoplasmic" evidence="1">
    <location>
        <begin position="278"/>
        <end position="287" status="greater than"/>
    </location>
</feature>
<feature type="short sequence motif" description="'Ionic lock' involved in activated form stabilization" evidence="1">
    <location>
        <begin position="103"/>
        <end position="105"/>
    </location>
</feature>
<feature type="site" description="Plays an important role in the conformation switch to the active conformation" evidence="1">
    <location>
        <position position="82"/>
    </location>
</feature>
<feature type="modified residue" description="N6-(retinylidene)lysine" evidence="1">
    <location>
        <position position="265"/>
    </location>
</feature>
<feature type="glycosylation site" description="N-linked (GlcNAc...) asparagine" evidence="5">
    <location>
        <position position="169"/>
    </location>
</feature>
<feature type="disulfide bond" evidence="6">
    <location>
        <begin position="79"/>
        <end position="156"/>
    </location>
</feature>
<feature type="non-terminal residue">
    <location>
        <position position="1"/>
    </location>
</feature>
<feature type="non-terminal residue">
    <location>
        <position position="287"/>
    </location>
</feature>
<keyword id="KW-0966">Cell projection</keyword>
<keyword id="KW-0157">Chromophore</keyword>
<keyword id="KW-1015">Disulfide bond</keyword>
<keyword id="KW-0297">G-protein coupled receptor</keyword>
<keyword id="KW-0325">Glycoprotein</keyword>
<keyword id="KW-0449">Lipoprotein</keyword>
<keyword id="KW-0472">Membrane</keyword>
<keyword id="KW-0597">Phosphoprotein</keyword>
<keyword id="KW-0600">Photoreceptor protein</keyword>
<keyword id="KW-0675">Receptor</keyword>
<keyword id="KW-0681">Retinal protein</keyword>
<keyword id="KW-0716">Sensory transduction</keyword>
<keyword id="KW-0807">Transducer</keyword>
<keyword id="KW-0812">Transmembrane</keyword>
<keyword id="KW-1133">Transmembrane helix</keyword>
<keyword id="KW-0844">Vision</keyword>
<reference key="1">
    <citation type="journal article" date="1997" name="Mol. Phylogenet. Evol.">
        <title>Molecular evolution of the cottoid fish endemic to Lake Baikal deduced from nuclear DNA evidence.</title>
        <authorList>
            <person name="Hunt D.M."/>
            <person name="Fitzgibbon J."/>
            <person name="Slobodyanyuk S.J."/>
            <person name="Bowmaker J.K."/>
            <person name="Dulai K.S."/>
        </authorList>
    </citation>
    <scope>NUCLEOTIDE SEQUENCE [GENOMIC DNA]</scope>
</reference>
<evidence type="ECO:0000250" key="1">
    <source>
        <dbReference type="UniProtKB" id="P02699"/>
    </source>
</evidence>
<evidence type="ECO:0000250" key="2">
    <source>
        <dbReference type="UniProtKB" id="P08100"/>
    </source>
</evidence>
<evidence type="ECO:0000250" key="3">
    <source>
        <dbReference type="UniProtKB" id="P32309"/>
    </source>
</evidence>
<evidence type="ECO:0000250" key="4">
    <source>
        <dbReference type="UniProtKB" id="P35359"/>
    </source>
</evidence>
<evidence type="ECO:0000255" key="5"/>
<evidence type="ECO:0000255" key="6">
    <source>
        <dbReference type="PROSITE-ProRule" id="PRU00521"/>
    </source>
</evidence>
<sequence length="287" mass="32265">VNGAAYAGLCAYMFLLILVGFPVNFLTLYVTLEHKKLRTPLNYILLNLAVADLFMVLGGFTTTMYTSAHGYFVLGRLGCNVEGFFATLGGEIALWSLVVLAVERWIVVCKPISNFRFTEEHAIMGLGFNWVMASACAVPPLVGWSRYIPEGMQCSCGINYYTRSEGFNNESLVMKMLICHFLIPLFVIFFCYGRMLCAVKEAAAAQQESETTQRAEREVSRMVVIMVISFLVCWLPYASVAWYIFCNQGSEFGPVFMTLPAFFAKSASIYNPLIYICMNKHSRHCMI</sequence>
<comment type="function">
    <text evidence="1 2 3">Photoreceptor required for image-forming vision at low light intensity. While most salt water fish species use retinal as chromophore, most freshwater fish use 3-dehydroretinal, or a mixture of retinal and 3-dehydroretinal (By similarity). Light-induced isomerization of 11-cis to all-trans retinal triggers a conformational change that activates signaling via G-proteins. Subsequent receptor phosphorylation mediates displacement of the bound G-protein alpha subunit by arrestin and terminates signaling (By similarity).</text>
</comment>
<comment type="subcellular location">
    <subcellularLocation>
        <location evidence="2">Membrane</location>
        <topology evidence="2">Multi-pass membrane protein</topology>
    </subcellularLocation>
    <subcellularLocation>
        <location evidence="4">Cell projection</location>
        <location evidence="4">Cilium</location>
        <location evidence="4">Photoreceptor outer segment</location>
    </subcellularLocation>
    <text evidence="2">Synthesized in the inner segment (IS) of rod photoreceptor cells before vectorial transport to disk membranes in the rod outer segment (OS) photosensory cilia.</text>
</comment>
<comment type="PTM">
    <text evidence="1">Phosphorylated on some or all of the serine and threonine residues present in the C-terminal region.</text>
</comment>
<comment type="PTM">
    <text evidence="1">Contains one covalently linked retinal chromophore.</text>
</comment>
<comment type="similarity">
    <text evidence="6">Belongs to the G-protein coupled receptor 1 family. Opsin subfamily.</text>
</comment>
<dbReference type="EMBL" id="U97275">
    <property type="protein sequence ID" value="AAB61729.1"/>
    <property type="molecule type" value="Genomic_DNA"/>
</dbReference>
<dbReference type="SMR" id="O42466"/>
<dbReference type="GlyCosmos" id="O42466">
    <property type="glycosylation" value="1 site, No reported glycans"/>
</dbReference>
<dbReference type="GO" id="GO:0016020">
    <property type="term" value="C:membrane"/>
    <property type="evidence" value="ECO:0000250"/>
    <property type="project" value="UniProtKB"/>
</dbReference>
<dbReference type="GO" id="GO:0097381">
    <property type="term" value="C:photoreceptor disc membrane"/>
    <property type="evidence" value="ECO:0000250"/>
    <property type="project" value="UniProtKB"/>
</dbReference>
<dbReference type="GO" id="GO:0005886">
    <property type="term" value="C:plasma membrane"/>
    <property type="evidence" value="ECO:0000250"/>
    <property type="project" value="UniProtKB"/>
</dbReference>
<dbReference type="GO" id="GO:0005502">
    <property type="term" value="F:11-cis retinal binding"/>
    <property type="evidence" value="ECO:0000250"/>
    <property type="project" value="UniProtKB"/>
</dbReference>
<dbReference type="GO" id="GO:0008020">
    <property type="term" value="F:G protein-coupled photoreceptor activity"/>
    <property type="evidence" value="ECO:0000250"/>
    <property type="project" value="UniProtKB"/>
</dbReference>
<dbReference type="GO" id="GO:0016038">
    <property type="term" value="P:absorption of visible light"/>
    <property type="evidence" value="ECO:0000250"/>
    <property type="project" value="UniProtKB"/>
</dbReference>
<dbReference type="GO" id="GO:0016056">
    <property type="term" value="P:G protein-coupled opsin signaling pathway"/>
    <property type="evidence" value="ECO:0000250"/>
    <property type="project" value="UniProtKB"/>
</dbReference>
<dbReference type="GO" id="GO:0007601">
    <property type="term" value="P:visual perception"/>
    <property type="evidence" value="ECO:0007669"/>
    <property type="project" value="UniProtKB-KW"/>
</dbReference>
<dbReference type="FunFam" id="1.20.1070.10:FF:000357">
    <property type="entry name" value="Rhodopsin"/>
    <property type="match status" value="1"/>
</dbReference>
<dbReference type="Gene3D" id="1.20.1070.10">
    <property type="entry name" value="Rhodopsin 7-helix transmembrane proteins"/>
    <property type="match status" value="1"/>
</dbReference>
<dbReference type="InterPro" id="IPR050125">
    <property type="entry name" value="GPCR_opsins"/>
</dbReference>
<dbReference type="InterPro" id="IPR000276">
    <property type="entry name" value="GPCR_Rhodpsn"/>
</dbReference>
<dbReference type="InterPro" id="IPR017452">
    <property type="entry name" value="GPCR_Rhodpsn_7TM"/>
</dbReference>
<dbReference type="InterPro" id="IPR001760">
    <property type="entry name" value="Opsin"/>
</dbReference>
<dbReference type="InterPro" id="IPR027430">
    <property type="entry name" value="Retinal_BS"/>
</dbReference>
<dbReference type="InterPro" id="IPR000732">
    <property type="entry name" value="Rhodopsin"/>
</dbReference>
<dbReference type="PANTHER" id="PTHR24240">
    <property type="entry name" value="OPSIN"/>
    <property type="match status" value="1"/>
</dbReference>
<dbReference type="Pfam" id="PF00001">
    <property type="entry name" value="7tm_1"/>
    <property type="match status" value="1"/>
</dbReference>
<dbReference type="PRINTS" id="PR00237">
    <property type="entry name" value="GPCRRHODOPSN"/>
</dbReference>
<dbReference type="PRINTS" id="PR00238">
    <property type="entry name" value="OPSIN"/>
</dbReference>
<dbReference type="PRINTS" id="PR00579">
    <property type="entry name" value="RHODOPSIN"/>
</dbReference>
<dbReference type="SUPFAM" id="SSF81321">
    <property type="entry name" value="Family A G protein-coupled receptor-like"/>
    <property type="match status" value="1"/>
</dbReference>
<dbReference type="PROSITE" id="PS00237">
    <property type="entry name" value="G_PROTEIN_RECEP_F1_1"/>
    <property type="match status" value="1"/>
</dbReference>
<dbReference type="PROSITE" id="PS50262">
    <property type="entry name" value="G_PROTEIN_RECEP_F1_2"/>
    <property type="match status" value="1"/>
</dbReference>
<dbReference type="PROSITE" id="PS00238">
    <property type="entry name" value="OPSIN"/>
    <property type="match status" value="1"/>
</dbReference>
<gene>
    <name type="primary">rho</name>
</gene>
<name>OPSD_TAUBU</name>
<proteinExistence type="inferred from homology"/>
<protein>
    <recommendedName>
        <fullName>Rhodopsin</fullName>
    </recommendedName>
</protein>
<organism>
    <name type="scientific">Taurulus bubalis</name>
    <name type="common">Long-spined sea scorpion</name>
    <name type="synonym">Cottus bubalis</name>
    <dbReference type="NCBI Taxonomy" id="61643"/>
    <lineage>
        <taxon>Eukaryota</taxon>
        <taxon>Metazoa</taxon>
        <taxon>Chordata</taxon>
        <taxon>Craniata</taxon>
        <taxon>Vertebrata</taxon>
        <taxon>Euteleostomi</taxon>
        <taxon>Actinopterygii</taxon>
        <taxon>Neopterygii</taxon>
        <taxon>Teleostei</taxon>
        <taxon>Neoteleostei</taxon>
        <taxon>Acanthomorphata</taxon>
        <taxon>Eupercaria</taxon>
        <taxon>Perciformes</taxon>
        <taxon>Cottioidei</taxon>
        <taxon>Cottales</taxon>
        <taxon>Cottidae</taxon>
        <taxon>Taurulus</taxon>
    </lineage>
</organism>
<accession>O42466</accession>